<organism>
    <name type="scientific">Pseudomonas fluorescens (strain Pf0-1)</name>
    <dbReference type="NCBI Taxonomy" id="205922"/>
    <lineage>
        <taxon>Bacteria</taxon>
        <taxon>Pseudomonadati</taxon>
        <taxon>Pseudomonadota</taxon>
        <taxon>Gammaproteobacteria</taxon>
        <taxon>Pseudomonadales</taxon>
        <taxon>Pseudomonadaceae</taxon>
        <taxon>Pseudomonas</taxon>
    </lineage>
</organism>
<comment type="similarity">
    <text evidence="1">Belongs to the bacterial ribosomal protein bS21 family.</text>
</comment>
<dbReference type="EMBL" id="CP000094">
    <property type="protein sequence ID" value="ABA76884.1"/>
    <property type="molecule type" value="Genomic_DNA"/>
</dbReference>
<dbReference type="RefSeq" id="WP_002551877.1">
    <property type="nucleotide sequence ID" value="NC_007492.2"/>
</dbReference>
<dbReference type="SMR" id="Q3K5S0"/>
<dbReference type="GeneID" id="98285513"/>
<dbReference type="KEGG" id="pfo:Pfl01_5147"/>
<dbReference type="eggNOG" id="COG0828">
    <property type="taxonomic scope" value="Bacteria"/>
</dbReference>
<dbReference type="HOGENOM" id="CLU_159258_1_0_6"/>
<dbReference type="Proteomes" id="UP000002704">
    <property type="component" value="Chromosome"/>
</dbReference>
<dbReference type="GO" id="GO:1990904">
    <property type="term" value="C:ribonucleoprotein complex"/>
    <property type="evidence" value="ECO:0007669"/>
    <property type="project" value="UniProtKB-KW"/>
</dbReference>
<dbReference type="GO" id="GO:0005840">
    <property type="term" value="C:ribosome"/>
    <property type="evidence" value="ECO:0007669"/>
    <property type="project" value="UniProtKB-KW"/>
</dbReference>
<dbReference type="GO" id="GO:0003735">
    <property type="term" value="F:structural constituent of ribosome"/>
    <property type="evidence" value="ECO:0007669"/>
    <property type="project" value="InterPro"/>
</dbReference>
<dbReference type="GO" id="GO:0006412">
    <property type="term" value="P:translation"/>
    <property type="evidence" value="ECO:0007669"/>
    <property type="project" value="UniProtKB-UniRule"/>
</dbReference>
<dbReference type="Gene3D" id="1.20.5.1150">
    <property type="entry name" value="Ribosomal protein S8"/>
    <property type="match status" value="1"/>
</dbReference>
<dbReference type="HAMAP" id="MF_00358">
    <property type="entry name" value="Ribosomal_bS21"/>
    <property type="match status" value="1"/>
</dbReference>
<dbReference type="InterPro" id="IPR001911">
    <property type="entry name" value="Ribosomal_bS21"/>
</dbReference>
<dbReference type="InterPro" id="IPR018278">
    <property type="entry name" value="Ribosomal_bS21_CS"/>
</dbReference>
<dbReference type="InterPro" id="IPR038380">
    <property type="entry name" value="Ribosomal_bS21_sf"/>
</dbReference>
<dbReference type="NCBIfam" id="TIGR00030">
    <property type="entry name" value="S21p"/>
    <property type="match status" value="1"/>
</dbReference>
<dbReference type="PANTHER" id="PTHR21109">
    <property type="entry name" value="MITOCHONDRIAL 28S RIBOSOMAL PROTEIN S21"/>
    <property type="match status" value="1"/>
</dbReference>
<dbReference type="PANTHER" id="PTHR21109:SF22">
    <property type="entry name" value="SMALL RIBOSOMAL SUBUNIT PROTEIN BS21"/>
    <property type="match status" value="1"/>
</dbReference>
<dbReference type="Pfam" id="PF01165">
    <property type="entry name" value="Ribosomal_S21"/>
    <property type="match status" value="1"/>
</dbReference>
<dbReference type="PRINTS" id="PR00976">
    <property type="entry name" value="RIBOSOMALS21"/>
</dbReference>
<dbReference type="PROSITE" id="PS01181">
    <property type="entry name" value="RIBOSOMAL_S21"/>
    <property type="match status" value="1"/>
</dbReference>
<proteinExistence type="inferred from homology"/>
<reference key="1">
    <citation type="journal article" date="2009" name="Genome Biol.">
        <title>Genomic and genetic analyses of diversity and plant interactions of Pseudomonas fluorescens.</title>
        <authorList>
            <person name="Silby M.W."/>
            <person name="Cerdeno-Tarraga A.M."/>
            <person name="Vernikos G.S."/>
            <person name="Giddens S.R."/>
            <person name="Jackson R.W."/>
            <person name="Preston G.M."/>
            <person name="Zhang X.-X."/>
            <person name="Moon C.D."/>
            <person name="Gehrig S.M."/>
            <person name="Godfrey S.A.C."/>
            <person name="Knight C.G."/>
            <person name="Malone J.G."/>
            <person name="Robinson Z."/>
            <person name="Spiers A.J."/>
            <person name="Harris S."/>
            <person name="Challis G.L."/>
            <person name="Yaxley A.M."/>
            <person name="Harris D."/>
            <person name="Seeger K."/>
            <person name="Murphy L."/>
            <person name="Rutter S."/>
            <person name="Squares R."/>
            <person name="Quail M.A."/>
            <person name="Saunders E."/>
            <person name="Mavromatis K."/>
            <person name="Brettin T.S."/>
            <person name="Bentley S.D."/>
            <person name="Hothersall J."/>
            <person name="Stephens E."/>
            <person name="Thomas C.M."/>
            <person name="Parkhill J."/>
            <person name="Levy S.B."/>
            <person name="Rainey P.B."/>
            <person name="Thomson N.R."/>
        </authorList>
    </citation>
    <scope>NUCLEOTIDE SEQUENCE [LARGE SCALE GENOMIC DNA]</scope>
    <source>
        <strain>Pf0-1</strain>
    </source>
</reference>
<accession>Q3K5S0</accession>
<keyword id="KW-0687">Ribonucleoprotein</keyword>
<keyword id="KW-0689">Ribosomal protein</keyword>
<gene>
    <name evidence="1" type="primary">rpsU</name>
    <name type="ordered locus">Pfl01_5147</name>
</gene>
<sequence>MPAVKVKENEPFDVALRRFKRSCEKAGVLAEVRSREFYEKPTSERKRKAAAAVKRHAKKVQREQRRAVRLY</sequence>
<feature type="chain" id="PRO_0000266736" description="Small ribosomal subunit protein bS21">
    <location>
        <begin position="1"/>
        <end position="71"/>
    </location>
</feature>
<feature type="region of interest" description="Disordered" evidence="2">
    <location>
        <begin position="50"/>
        <end position="71"/>
    </location>
</feature>
<feature type="compositionally biased region" description="Basic residues" evidence="2">
    <location>
        <begin position="50"/>
        <end position="59"/>
    </location>
</feature>
<feature type="compositionally biased region" description="Basic and acidic residues" evidence="2">
    <location>
        <begin position="60"/>
        <end position="71"/>
    </location>
</feature>
<name>RS21_PSEPF</name>
<evidence type="ECO:0000255" key="1">
    <source>
        <dbReference type="HAMAP-Rule" id="MF_00358"/>
    </source>
</evidence>
<evidence type="ECO:0000256" key="2">
    <source>
        <dbReference type="SAM" id="MobiDB-lite"/>
    </source>
</evidence>
<evidence type="ECO:0000305" key="3"/>
<protein>
    <recommendedName>
        <fullName evidence="1">Small ribosomal subunit protein bS21</fullName>
    </recommendedName>
    <alternativeName>
        <fullName evidence="3">30S ribosomal protein S21</fullName>
    </alternativeName>
</protein>